<proteinExistence type="evidence at transcript level"/>
<accession>Q0IHN5</accession>
<reference key="1">
    <citation type="submission" date="2006-09" db="EMBL/GenBank/DDBJ databases">
        <authorList>
            <consortium name="NIH - Xenopus Gene Collection (XGC) project"/>
        </authorList>
    </citation>
    <scope>NUCLEOTIDE SEQUENCE [LARGE SCALE MRNA]</scope>
    <source>
        <strain>N6</strain>
        <tissue>Lung</tissue>
    </source>
</reference>
<gene>
    <name type="primary">eme2</name>
</gene>
<comment type="function">
    <text evidence="1">Non-catalytic subunit of the structure-specific, heterodimeric DNA endonuclease MUS81-EME2 which is involved in the maintenance of genome stability. In the complex, EME2 is required for DNA cleavage, participating in DNA recognition and bending. MUS81-EME2 cleaves 3'-flaps and nicked Holliday junctions, and exhibit limited endonuclease activity with 5' flaps and nicked double-stranded DNAs. MUS81-EME2 which is active during the replication of DNA is more specifically involved in replication fork processing. Replication forks frequently encounter obstacles to their passage, including DNA base lesions, DNA interstrand cross-links, difficult-to-replicate sequences, transcription bubbles, or tightly bound proteins. One mechanism for the restart of a stalled replication fork involves nucleolytic cleavage mediated by the MUS81-EME2 endonuclease. By acting upon the stalled fork, MUS81-EME2 generates a DNA double-strand break (DSB) that can be repaired by homologous recombination, leading to the restoration of an active fork. MUS81-EME2 could also function in telomere maintenance.</text>
</comment>
<comment type="subunit">
    <text evidence="1">Part of the heterodimeric MUS81-EME2 complex; the complex forms specifically during the DNA replication phase of the cell cycle.</text>
</comment>
<comment type="subcellular location">
    <subcellularLocation>
        <location evidence="1">Nucleus</location>
    </subcellularLocation>
</comment>
<comment type="similarity">
    <text evidence="4">Belongs to the EME1/MMS4 family.</text>
</comment>
<organism>
    <name type="scientific">Xenopus tropicalis</name>
    <name type="common">Western clawed frog</name>
    <name type="synonym">Silurana tropicalis</name>
    <dbReference type="NCBI Taxonomy" id="8364"/>
    <lineage>
        <taxon>Eukaryota</taxon>
        <taxon>Metazoa</taxon>
        <taxon>Chordata</taxon>
        <taxon>Craniata</taxon>
        <taxon>Vertebrata</taxon>
        <taxon>Euteleostomi</taxon>
        <taxon>Amphibia</taxon>
        <taxon>Batrachia</taxon>
        <taxon>Anura</taxon>
        <taxon>Pipoidea</taxon>
        <taxon>Pipidae</taxon>
        <taxon>Xenopodinae</taxon>
        <taxon>Xenopus</taxon>
        <taxon>Silurana</taxon>
    </lineage>
</organism>
<sequence>METKQERETGRSSPDPSPRKLIRRAATWEISDSDNEEETNKPQTESRKGPIVNIEATDQLLGVQKDPAQQPDVEEKTKNLVLPPPTSTTPSPTRRSRKKKTPEQVAAEQEQAEEKKRQRELKRQEKAQKKELEKIERERRKETNLALKLLRPDQCGKYMVVKVDAGLLEDAGSEDVLEALRVAEYNYSIEPHSVPQSISWRREMPADWTCIEGMDMKEEEEDQLLVLVEPKSYLSSVRTYAQAPYYFCVGNEMEEIPGSVFSIPAKNPHKKVTLVIIGLQEYRWCERLSRQIQRQSLDAAEGRDSNKDQSATRATRQQIQEALVFLQLHYNTEVLCLDTWKELGQHVCAVTKSIAQRPFRKHWEAQTFSFCTSAGSWRGWGPRGVLTGLPLTWRRQIQQLNRVSPAMAAVVSQAYPSPQLLMQAYSACGSDRERMSLLTDLRIPQDNNTGVTQKAEDPREVADIAQEGDQVPGRERRIGPDLSRRIWLLMTSKNPELVLDLNS</sequence>
<dbReference type="EMBL" id="BC123066">
    <property type="protein sequence ID" value="AAI23067.1"/>
    <property type="molecule type" value="mRNA"/>
</dbReference>
<dbReference type="RefSeq" id="NP_001072860.1">
    <property type="nucleotide sequence ID" value="NM_001079392.1"/>
</dbReference>
<dbReference type="RefSeq" id="XP_012826030.1">
    <property type="nucleotide sequence ID" value="XM_012970576.2"/>
</dbReference>
<dbReference type="SMR" id="Q0IHN5"/>
<dbReference type="FunCoup" id="Q0IHN5">
    <property type="interactions" value="84"/>
</dbReference>
<dbReference type="STRING" id="8364.ENSXETP00000022492"/>
<dbReference type="PaxDb" id="8364-ENSXETP00000060065"/>
<dbReference type="DNASU" id="780321"/>
<dbReference type="GeneID" id="780321"/>
<dbReference type="KEGG" id="xtr:780321"/>
<dbReference type="AGR" id="Xenbase:XB-GENE-5926460"/>
<dbReference type="CTD" id="197342"/>
<dbReference type="Xenbase" id="XB-GENE-5926460">
    <property type="gene designation" value="eme2"/>
</dbReference>
<dbReference type="eggNOG" id="ENOG502RQYN">
    <property type="taxonomic scope" value="Eukaryota"/>
</dbReference>
<dbReference type="HOGENOM" id="CLU_034099_1_0_1"/>
<dbReference type="InParanoid" id="Q0IHN5"/>
<dbReference type="OMA" id="VWAAGEQ"/>
<dbReference type="OrthoDB" id="343092at2759"/>
<dbReference type="PhylomeDB" id="Q0IHN5"/>
<dbReference type="TreeFam" id="TF325310"/>
<dbReference type="Reactome" id="R-XTR-5693568">
    <property type="pathway name" value="Resolution of D-loop Structures through Holliday Junction Intermediates"/>
</dbReference>
<dbReference type="Proteomes" id="UP000008143">
    <property type="component" value="Chromosome 9"/>
</dbReference>
<dbReference type="Bgee" id="ENSXETG00000031981">
    <property type="expression patterns" value="Expressed in 2-cell stage embryo and 13 other cell types or tissues"/>
</dbReference>
<dbReference type="GO" id="GO:0048476">
    <property type="term" value="C:Holliday junction resolvase complex"/>
    <property type="evidence" value="ECO:0007669"/>
    <property type="project" value="InterPro"/>
</dbReference>
<dbReference type="GO" id="GO:0005634">
    <property type="term" value="C:nucleus"/>
    <property type="evidence" value="ECO:0007669"/>
    <property type="project" value="UniProtKB-SubCell"/>
</dbReference>
<dbReference type="GO" id="GO:0003677">
    <property type="term" value="F:DNA binding"/>
    <property type="evidence" value="ECO:0007669"/>
    <property type="project" value="InterPro"/>
</dbReference>
<dbReference type="GO" id="GO:0004519">
    <property type="term" value="F:endonuclease activity"/>
    <property type="evidence" value="ECO:0007669"/>
    <property type="project" value="UniProtKB-KW"/>
</dbReference>
<dbReference type="GO" id="GO:0006310">
    <property type="term" value="P:DNA recombination"/>
    <property type="evidence" value="ECO:0007669"/>
    <property type="project" value="UniProtKB-KW"/>
</dbReference>
<dbReference type="GO" id="GO:0006281">
    <property type="term" value="P:DNA repair"/>
    <property type="evidence" value="ECO:0007669"/>
    <property type="project" value="UniProtKB-KW"/>
</dbReference>
<dbReference type="CDD" id="cd20082">
    <property type="entry name" value="XPF_nuclease_EME2"/>
    <property type="match status" value="1"/>
</dbReference>
<dbReference type="Gene3D" id="3.40.50.10130">
    <property type="match status" value="1"/>
</dbReference>
<dbReference type="Gene3D" id="1.10.150.670">
    <property type="entry name" value="Crossover junction endonuclease EME1, DNA-binding domain"/>
    <property type="match status" value="1"/>
</dbReference>
<dbReference type="InterPro" id="IPR042530">
    <property type="entry name" value="EME1/EME2_C"/>
</dbReference>
<dbReference type="InterPro" id="IPR006166">
    <property type="entry name" value="ERCC4_domain"/>
</dbReference>
<dbReference type="InterPro" id="IPR033310">
    <property type="entry name" value="Mms4/EME1/EME2"/>
</dbReference>
<dbReference type="InterPro" id="IPR047523">
    <property type="entry name" value="XPF_nuclease_EME2"/>
</dbReference>
<dbReference type="PANTHER" id="PTHR21077:SF6">
    <property type="entry name" value="CROSSOVER JUNCTION ENDONUCLEASE EME2-RELATED"/>
    <property type="match status" value="1"/>
</dbReference>
<dbReference type="PANTHER" id="PTHR21077">
    <property type="entry name" value="EME1 PROTEIN"/>
    <property type="match status" value="1"/>
</dbReference>
<dbReference type="Pfam" id="PF21292">
    <property type="entry name" value="EME1-MUS81_C"/>
    <property type="match status" value="1"/>
</dbReference>
<dbReference type="Pfam" id="PF02732">
    <property type="entry name" value="ERCC4"/>
    <property type="match status" value="1"/>
</dbReference>
<dbReference type="SMART" id="SM00891">
    <property type="entry name" value="ERCC4"/>
    <property type="match status" value="1"/>
</dbReference>
<protein>
    <recommendedName>
        <fullName evidence="1">Structure-specific endonuclease subunit EME2</fullName>
    </recommendedName>
</protein>
<feature type="chain" id="PRO_0000317375" description="Structure-specific endonuclease subunit EME2">
    <location>
        <begin position="1"/>
        <end position="503"/>
    </location>
</feature>
<feature type="region of interest" description="Disordered" evidence="3">
    <location>
        <begin position="1"/>
        <end position="135"/>
    </location>
</feature>
<feature type="region of interest" description="Nuclease-like domain; forms the post-nick DNA binding interface and is involved in DNA recognition and bending" evidence="1">
    <location>
        <begin position="70"/>
        <end position="366"/>
    </location>
</feature>
<feature type="region of interest" description="Helix-hairpin-helix (2HhH); forms the pre-nick DNA binding interface and is involved in DNA recognition and bending" evidence="1">
    <location>
        <begin position="388"/>
        <end position="503"/>
    </location>
</feature>
<feature type="coiled-coil region" evidence="2">
    <location>
        <begin position="103"/>
        <end position="151"/>
    </location>
</feature>
<feature type="compositionally biased region" description="Basic and acidic residues" evidence="3">
    <location>
        <begin position="1"/>
        <end position="10"/>
    </location>
</feature>
<feature type="compositionally biased region" description="Basic and acidic residues" evidence="3">
    <location>
        <begin position="38"/>
        <end position="48"/>
    </location>
</feature>
<feature type="compositionally biased region" description="Basic and acidic residues" evidence="3">
    <location>
        <begin position="112"/>
        <end position="135"/>
    </location>
</feature>
<name>EME2_XENTR</name>
<evidence type="ECO:0000250" key="1">
    <source>
        <dbReference type="UniProtKB" id="A4GXA9"/>
    </source>
</evidence>
<evidence type="ECO:0000255" key="2"/>
<evidence type="ECO:0000256" key="3">
    <source>
        <dbReference type="SAM" id="MobiDB-lite"/>
    </source>
</evidence>
<evidence type="ECO:0000305" key="4"/>
<keyword id="KW-0175">Coiled coil</keyword>
<keyword id="KW-0227">DNA damage</keyword>
<keyword id="KW-0233">DNA recombination</keyword>
<keyword id="KW-0234">DNA repair</keyword>
<keyword id="KW-0539">Nucleus</keyword>
<keyword id="KW-1185">Reference proteome</keyword>